<organism>
    <name type="scientific">Synechococcus sp. (strain CC9311)</name>
    <dbReference type="NCBI Taxonomy" id="64471"/>
    <lineage>
        <taxon>Bacteria</taxon>
        <taxon>Bacillati</taxon>
        <taxon>Cyanobacteriota</taxon>
        <taxon>Cyanophyceae</taxon>
        <taxon>Synechococcales</taxon>
        <taxon>Synechococcaceae</taxon>
        <taxon>Synechococcus</taxon>
    </lineage>
</organism>
<accession>Q0IAF3</accession>
<keyword id="KW-0067">ATP-binding</keyword>
<keyword id="KW-0173">Coenzyme A biosynthesis</keyword>
<keyword id="KW-0963">Cytoplasm</keyword>
<keyword id="KW-0460">Magnesium</keyword>
<keyword id="KW-0547">Nucleotide-binding</keyword>
<keyword id="KW-0548">Nucleotidyltransferase</keyword>
<keyword id="KW-1185">Reference proteome</keyword>
<keyword id="KW-0808">Transferase</keyword>
<dbReference type="EC" id="2.7.7.3" evidence="1"/>
<dbReference type="EMBL" id="CP000435">
    <property type="protein sequence ID" value="ABI45964.1"/>
    <property type="molecule type" value="Genomic_DNA"/>
</dbReference>
<dbReference type="RefSeq" id="WP_011619287.1">
    <property type="nucleotide sequence ID" value="NC_008319.1"/>
</dbReference>
<dbReference type="SMR" id="Q0IAF3"/>
<dbReference type="STRING" id="64471.sync_1362"/>
<dbReference type="KEGG" id="syg:sync_1362"/>
<dbReference type="eggNOG" id="COG0669">
    <property type="taxonomic scope" value="Bacteria"/>
</dbReference>
<dbReference type="HOGENOM" id="CLU_100149_0_1_3"/>
<dbReference type="OrthoDB" id="9806661at2"/>
<dbReference type="UniPathway" id="UPA00241">
    <property type="reaction ID" value="UER00355"/>
</dbReference>
<dbReference type="Proteomes" id="UP000001961">
    <property type="component" value="Chromosome"/>
</dbReference>
<dbReference type="GO" id="GO:0005737">
    <property type="term" value="C:cytoplasm"/>
    <property type="evidence" value="ECO:0007669"/>
    <property type="project" value="UniProtKB-SubCell"/>
</dbReference>
<dbReference type="GO" id="GO:0005524">
    <property type="term" value="F:ATP binding"/>
    <property type="evidence" value="ECO:0007669"/>
    <property type="project" value="UniProtKB-KW"/>
</dbReference>
<dbReference type="GO" id="GO:0004595">
    <property type="term" value="F:pantetheine-phosphate adenylyltransferase activity"/>
    <property type="evidence" value="ECO:0007669"/>
    <property type="project" value="UniProtKB-UniRule"/>
</dbReference>
<dbReference type="GO" id="GO:0015937">
    <property type="term" value="P:coenzyme A biosynthetic process"/>
    <property type="evidence" value="ECO:0007669"/>
    <property type="project" value="UniProtKB-UniRule"/>
</dbReference>
<dbReference type="CDD" id="cd02163">
    <property type="entry name" value="PPAT"/>
    <property type="match status" value="1"/>
</dbReference>
<dbReference type="Gene3D" id="3.40.50.620">
    <property type="entry name" value="HUPs"/>
    <property type="match status" value="1"/>
</dbReference>
<dbReference type="HAMAP" id="MF_00151">
    <property type="entry name" value="PPAT_bact"/>
    <property type="match status" value="1"/>
</dbReference>
<dbReference type="InterPro" id="IPR004821">
    <property type="entry name" value="Cyt_trans-like"/>
</dbReference>
<dbReference type="InterPro" id="IPR001980">
    <property type="entry name" value="PPAT"/>
</dbReference>
<dbReference type="InterPro" id="IPR014729">
    <property type="entry name" value="Rossmann-like_a/b/a_fold"/>
</dbReference>
<dbReference type="NCBIfam" id="TIGR01510">
    <property type="entry name" value="coaD_prev_kdtB"/>
    <property type="match status" value="1"/>
</dbReference>
<dbReference type="NCBIfam" id="TIGR00125">
    <property type="entry name" value="cyt_tran_rel"/>
    <property type="match status" value="1"/>
</dbReference>
<dbReference type="PANTHER" id="PTHR21342">
    <property type="entry name" value="PHOSPHOPANTETHEINE ADENYLYLTRANSFERASE"/>
    <property type="match status" value="1"/>
</dbReference>
<dbReference type="PANTHER" id="PTHR21342:SF1">
    <property type="entry name" value="PHOSPHOPANTETHEINE ADENYLYLTRANSFERASE"/>
    <property type="match status" value="1"/>
</dbReference>
<dbReference type="Pfam" id="PF01467">
    <property type="entry name" value="CTP_transf_like"/>
    <property type="match status" value="1"/>
</dbReference>
<dbReference type="PRINTS" id="PR01020">
    <property type="entry name" value="LPSBIOSNTHSS"/>
</dbReference>
<dbReference type="SUPFAM" id="SSF52374">
    <property type="entry name" value="Nucleotidylyl transferase"/>
    <property type="match status" value="1"/>
</dbReference>
<gene>
    <name evidence="1" type="primary">coaD</name>
    <name type="ordered locus">sync_1362</name>
</gene>
<comment type="function">
    <text evidence="1">Reversibly transfers an adenylyl group from ATP to 4'-phosphopantetheine, yielding dephospho-CoA (dPCoA) and pyrophosphate.</text>
</comment>
<comment type="catalytic activity">
    <reaction evidence="1">
        <text>(R)-4'-phosphopantetheine + ATP + H(+) = 3'-dephospho-CoA + diphosphate</text>
        <dbReference type="Rhea" id="RHEA:19801"/>
        <dbReference type="ChEBI" id="CHEBI:15378"/>
        <dbReference type="ChEBI" id="CHEBI:30616"/>
        <dbReference type="ChEBI" id="CHEBI:33019"/>
        <dbReference type="ChEBI" id="CHEBI:57328"/>
        <dbReference type="ChEBI" id="CHEBI:61723"/>
        <dbReference type="EC" id="2.7.7.3"/>
    </reaction>
</comment>
<comment type="cofactor">
    <cofactor evidence="1">
        <name>Mg(2+)</name>
        <dbReference type="ChEBI" id="CHEBI:18420"/>
    </cofactor>
</comment>
<comment type="pathway">
    <text evidence="1">Cofactor biosynthesis; coenzyme A biosynthesis; CoA from (R)-pantothenate: step 4/5.</text>
</comment>
<comment type="subunit">
    <text evidence="1">Homohexamer.</text>
</comment>
<comment type="subcellular location">
    <subcellularLocation>
        <location evidence="1">Cytoplasm</location>
    </subcellularLocation>
</comment>
<comment type="similarity">
    <text evidence="1">Belongs to the bacterial CoaD family.</text>
</comment>
<name>COAD_SYNS3</name>
<sequence>MRALYPGSFDPLTLGHLDLIERGCSLFGEVVVAVLQNPGKSPAFSLDQRLEQITQATSHLQGVTVTSFNGLTVNCAREHHAQLILRGLRAMSDFEYELQIAHTNRSLDSEFETIFLSTAAHYSFLSSSVVKEVARFGGRVEHMVPAVVAEDLKRFFNSAL</sequence>
<reference key="1">
    <citation type="journal article" date="2006" name="Proc. Natl. Acad. Sci. U.S.A.">
        <title>Genome sequence of Synechococcus CC9311: insights into adaptation to a coastal environment.</title>
        <authorList>
            <person name="Palenik B."/>
            <person name="Ren Q."/>
            <person name="Dupont C.L."/>
            <person name="Myers G.S."/>
            <person name="Heidelberg J.F."/>
            <person name="Badger J.H."/>
            <person name="Madupu R."/>
            <person name="Nelson W.C."/>
            <person name="Brinkac L.M."/>
            <person name="Dodson R.J."/>
            <person name="Durkin A.S."/>
            <person name="Daugherty S.C."/>
            <person name="Sullivan S.A."/>
            <person name="Khouri H."/>
            <person name="Mohamoud Y."/>
            <person name="Halpin R."/>
            <person name="Paulsen I.T."/>
        </authorList>
    </citation>
    <scope>NUCLEOTIDE SEQUENCE [LARGE SCALE GENOMIC DNA]</scope>
    <source>
        <strain>CC9311</strain>
    </source>
</reference>
<proteinExistence type="inferred from homology"/>
<feature type="chain" id="PRO_1000011264" description="Phosphopantetheine adenylyltransferase">
    <location>
        <begin position="1"/>
        <end position="160"/>
    </location>
</feature>
<feature type="binding site" evidence="1">
    <location>
        <begin position="8"/>
        <end position="9"/>
    </location>
    <ligand>
        <name>ATP</name>
        <dbReference type="ChEBI" id="CHEBI:30616"/>
    </ligand>
</feature>
<feature type="binding site" evidence="1">
    <location>
        <position position="8"/>
    </location>
    <ligand>
        <name>substrate</name>
    </ligand>
</feature>
<feature type="binding site" evidence="1">
    <location>
        <position position="16"/>
    </location>
    <ligand>
        <name>ATP</name>
        <dbReference type="ChEBI" id="CHEBI:30616"/>
    </ligand>
</feature>
<feature type="binding site" evidence="1">
    <location>
        <position position="40"/>
    </location>
    <ligand>
        <name>substrate</name>
    </ligand>
</feature>
<feature type="binding site" evidence="1">
    <location>
        <position position="72"/>
    </location>
    <ligand>
        <name>substrate</name>
    </ligand>
</feature>
<feature type="binding site" evidence="1">
    <location>
        <position position="86"/>
    </location>
    <ligand>
        <name>substrate</name>
    </ligand>
</feature>
<feature type="binding site" evidence="1">
    <location>
        <begin position="87"/>
        <end position="89"/>
    </location>
    <ligand>
        <name>ATP</name>
        <dbReference type="ChEBI" id="CHEBI:30616"/>
    </ligand>
</feature>
<feature type="binding site" evidence="1">
    <location>
        <position position="97"/>
    </location>
    <ligand>
        <name>ATP</name>
        <dbReference type="ChEBI" id="CHEBI:30616"/>
    </ligand>
</feature>
<feature type="binding site" evidence="1">
    <location>
        <begin position="122"/>
        <end position="128"/>
    </location>
    <ligand>
        <name>ATP</name>
        <dbReference type="ChEBI" id="CHEBI:30616"/>
    </ligand>
</feature>
<feature type="site" description="Transition state stabilizer" evidence="1">
    <location>
        <position position="16"/>
    </location>
</feature>
<protein>
    <recommendedName>
        <fullName evidence="1">Phosphopantetheine adenylyltransferase</fullName>
        <ecNumber evidence="1">2.7.7.3</ecNumber>
    </recommendedName>
    <alternativeName>
        <fullName evidence="1">Dephospho-CoA pyrophosphorylase</fullName>
    </alternativeName>
    <alternativeName>
        <fullName evidence="1">Pantetheine-phosphate adenylyltransferase</fullName>
        <shortName evidence="1">PPAT</shortName>
    </alternativeName>
</protein>
<evidence type="ECO:0000255" key="1">
    <source>
        <dbReference type="HAMAP-Rule" id="MF_00151"/>
    </source>
</evidence>